<proteinExistence type="inferred from homology"/>
<comment type="function">
    <text evidence="1">Channel that opens in response to stretch forces in the membrane lipid bilayer. May participate in the regulation of osmotic pressure changes within the cell.</text>
</comment>
<comment type="subunit">
    <text evidence="1">Homopentamer.</text>
</comment>
<comment type="subcellular location">
    <subcellularLocation>
        <location evidence="1">Cell inner membrane</location>
        <topology evidence="1">Multi-pass membrane protein</topology>
    </subcellularLocation>
</comment>
<comment type="similarity">
    <text evidence="1">Belongs to the MscL family.</text>
</comment>
<name>MSCL_ECODH</name>
<organism>
    <name type="scientific">Escherichia coli (strain K12 / DH10B)</name>
    <dbReference type="NCBI Taxonomy" id="316385"/>
    <lineage>
        <taxon>Bacteria</taxon>
        <taxon>Pseudomonadati</taxon>
        <taxon>Pseudomonadota</taxon>
        <taxon>Gammaproteobacteria</taxon>
        <taxon>Enterobacterales</taxon>
        <taxon>Enterobacteriaceae</taxon>
        <taxon>Escherichia</taxon>
    </lineage>
</organism>
<keyword id="KW-0997">Cell inner membrane</keyword>
<keyword id="KW-1003">Cell membrane</keyword>
<keyword id="KW-0407">Ion channel</keyword>
<keyword id="KW-0406">Ion transport</keyword>
<keyword id="KW-0472">Membrane</keyword>
<keyword id="KW-0812">Transmembrane</keyword>
<keyword id="KW-1133">Transmembrane helix</keyword>
<keyword id="KW-0813">Transport</keyword>
<evidence type="ECO:0000255" key="1">
    <source>
        <dbReference type="HAMAP-Rule" id="MF_00115"/>
    </source>
</evidence>
<feature type="chain" id="PRO_1000094892" description="Large-conductance mechanosensitive channel">
    <location>
        <begin position="1"/>
        <end position="136"/>
    </location>
</feature>
<feature type="transmembrane region" description="Helical" evidence="1">
    <location>
        <begin position="10"/>
        <end position="30"/>
    </location>
</feature>
<feature type="transmembrane region" description="Helical" evidence="1">
    <location>
        <begin position="76"/>
        <end position="96"/>
    </location>
</feature>
<protein>
    <recommendedName>
        <fullName evidence="1">Large-conductance mechanosensitive channel</fullName>
    </recommendedName>
</protein>
<reference key="1">
    <citation type="journal article" date="2008" name="J. Bacteriol.">
        <title>The complete genome sequence of Escherichia coli DH10B: insights into the biology of a laboratory workhorse.</title>
        <authorList>
            <person name="Durfee T."/>
            <person name="Nelson R."/>
            <person name="Baldwin S."/>
            <person name="Plunkett G. III"/>
            <person name="Burland V."/>
            <person name="Mau B."/>
            <person name="Petrosino J.F."/>
            <person name="Qin X."/>
            <person name="Muzny D.M."/>
            <person name="Ayele M."/>
            <person name="Gibbs R.A."/>
            <person name="Csorgo B."/>
            <person name="Posfai G."/>
            <person name="Weinstock G.M."/>
            <person name="Blattner F.R."/>
        </authorList>
    </citation>
    <scope>NUCLEOTIDE SEQUENCE [LARGE SCALE GENOMIC DNA]</scope>
    <source>
        <strain>K12 / DH10B</strain>
    </source>
</reference>
<sequence>MSIIKEFREFAMRGNVVDLAVGVIIGAAFGKIVSSLVADIIMPPLGLLIGGIDFKQFAVTLRDAQGDIPAVVMHYGVFIQNVFDFLIVAFAIFMAIKLINKLNRKKEEPAAAPAPTKEEVLLTEIRDLLKEQNNRS</sequence>
<gene>
    <name evidence="1" type="primary">mscL</name>
    <name type="ordered locus">ECDH10B_3465</name>
</gene>
<dbReference type="EMBL" id="CP000948">
    <property type="protein sequence ID" value="ACB04352.1"/>
    <property type="molecule type" value="Genomic_DNA"/>
</dbReference>
<dbReference type="RefSeq" id="WP_000022442.1">
    <property type="nucleotide sequence ID" value="NC_010473.1"/>
</dbReference>
<dbReference type="SMR" id="B1X6E2"/>
<dbReference type="GeneID" id="75173461"/>
<dbReference type="KEGG" id="ecd:ECDH10B_3465"/>
<dbReference type="HOGENOM" id="CLU_095787_0_0_6"/>
<dbReference type="GO" id="GO:0005886">
    <property type="term" value="C:plasma membrane"/>
    <property type="evidence" value="ECO:0007669"/>
    <property type="project" value="UniProtKB-SubCell"/>
</dbReference>
<dbReference type="GO" id="GO:0008381">
    <property type="term" value="F:mechanosensitive monoatomic ion channel activity"/>
    <property type="evidence" value="ECO:0007669"/>
    <property type="project" value="UniProtKB-UniRule"/>
</dbReference>
<dbReference type="FunFam" id="1.10.1200.120:FF:000001">
    <property type="entry name" value="Large-conductance mechanosensitive channel"/>
    <property type="match status" value="1"/>
</dbReference>
<dbReference type="Gene3D" id="1.10.1200.120">
    <property type="entry name" value="Large-conductance mechanosensitive channel, MscL, domain 1"/>
    <property type="match status" value="1"/>
</dbReference>
<dbReference type="HAMAP" id="MF_00115">
    <property type="entry name" value="MscL"/>
    <property type="match status" value="1"/>
</dbReference>
<dbReference type="InterPro" id="IPR019823">
    <property type="entry name" value="Mechanosensitive_channel_CS"/>
</dbReference>
<dbReference type="InterPro" id="IPR001185">
    <property type="entry name" value="MS_channel"/>
</dbReference>
<dbReference type="InterPro" id="IPR037673">
    <property type="entry name" value="MSC/AndL"/>
</dbReference>
<dbReference type="InterPro" id="IPR036019">
    <property type="entry name" value="MscL_channel"/>
</dbReference>
<dbReference type="NCBIfam" id="TIGR00220">
    <property type="entry name" value="mscL"/>
    <property type="match status" value="1"/>
</dbReference>
<dbReference type="NCBIfam" id="NF001841">
    <property type="entry name" value="PRK00567.1-1"/>
    <property type="match status" value="1"/>
</dbReference>
<dbReference type="NCBIfam" id="NF001843">
    <property type="entry name" value="PRK00567.1-4"/>
    <property type="match status" value="1"/>
</dbReference>
<dbReference type="PANTHER" id="PTHR30266:SF2">
    <property type="entry name" value="LARGE-CONDUCTANCE MECHANOSENSITIVE CHANNEL"/>
    <property type="match status" value="1"/>
</dbReference>
<dbReference type="PANTHER" id="PTHR30266">
    <property type="entry name" value="MECHANOSENSITIVE CHANNEL MSCL"/>
    <property type="match status" value="1"/>
</dbReference>
<dbReference type="Pfam" id="PF01741">
    <property type="entry name" value="MscL"/>
    <property type="match status" value="1"/>
</dbReference>
<dbReference type="PRINTS" id="PR01264">
    <property type="entry name" value="MECHCHANNEL"/>
</dbReference>
<dbReference type="SUPFAM" id="SSF81330">
    <property type="entry name" value="Gated mechanosensitive channel"/>
    <property type="match status" value="1"/>
</dbReference>
<dbReference type="PROSITE" id="PS01327">
    <property type="entry name" value="MSCL"/>
    <property type="match status" value="1"/>
</dbReference>
<accession>B1X6E2</accession>